<evidence type="ECO:0000255" key="1"/>
<evidence type="ECO:0000255" key="2">
    <source>
        <dbReference type="PROSITE-ProRule" id="PRU00498"/>
    </source>
</evidence>
<evidence type="ECO:0000256" key="3">
    <source>
        <dbReference type="SAM" id="MobiDB-lite"/>
    </source>
</evidence>
<evidence type="ECO:0000269" key="4">
    <source>
    </source>
</evidence>
<evidence type="ECO:0000269" key="5">
    <source>
    </source>
</evidence>
<evidence type="ECO:0000303" key="6">
    <source>
    </source>
</evidence>
<evidence type="ECO:0000303" key="7">
    <source>
    </source>
</evidence>
<evidence type="ECO:0000305" key="8"/>
<reference key="1">
    <citation type="submission" date="2005-09" db="EMBL/GenBank/DDBJ databases">
        <title>Annotation of the Aspergillus terreus NIH2624 genome.</title>
        <authorList>
            <person name="Birren B.W."/>
            <person name="Lander E.S."/>
            <person name="Galagan J.E."/>
            <person name="Nusbaum C."/>
            <person name="Devon K."/>
            <person name="Henn M."/>
            <person name="Ma L.-J."/>
            <person name="Jaffe D.B."/>
            <person name="Butler J."/>
            <person name="Alvarez P."/>
            <person name="Gnerre S."/>
            <person name="Grabherr M."/>
            <person name="Kleber M."/>
            <person name="Mauceli E.W."/>
            <person name="Brockman W."/>
            <person name="Rounsley S."/>
            <person name="Young S.K."/>
            <person name="LaButti K."/>
            <person name="Pushparaj V."/>
            <person name="DeCaprio D."/>
            <person name="Crawford M."/>
            <person name="Koehrsen M."/>
            <person name="Engels R."/>
            <person name="Montgomery P."/>
            <person name="Pearson M."/>
            <person name="Howarth C."/>
            <person name="Larson L."/>
            <person name="Luoma S."/>
            <person name="White J."/>
            <person name="Alvarado L."/>
            <person name="Kodira C.D."/>
            <person name="Zeng Q."/>
            <person name="Oleary S."/>
            <person name="Yandava C."/>
            <person name="Denning D.W."/>
            <person name="Nierman W.C."/>
            <person name="Milne T."/>
            <person name="Madden K."/>
        </authorList>
    </citation>
    <scope>NUCLEOTIDE SEQUENCE [LARGE SCALE GENOMIC DNA]</scope>
    <source>
        <strain>NIH 2624 / FGSC A1156</strain>
    </source>
</reference>
<reference key="2">
    <citation type="journal article" date="2017" name="Microorganisms">
        <title>Melanisation of Aspergillus terreus-is butyrolactone I involved in the regulation of both DOPA and DHN types of pigments in submerged culture?</title>
        <authorList>
            <person name="Palonen E.K."/>
            <person name="Raina S."/>
            <person name="Brandt A."/>
            <person name="Meriluoto J."/>
            <person name="Keshavarz T."/>
            <person name="Soini J.T."/>
        </authorList>
    </citation>
    <scope>IDENTIFICATION</scope>
    <scope>FUNCTION</scope>
    <source>
        <strain>MUCL38669</strain>
    </source>
</reference>
<reference key="3">
    <citation type="journal article" date="2022" name="Fungal Genet. Biol.">
        <title>Identification of a polyketide biosynthesis gene cluster by transcriptional regulator activation in Aspergillus terreus.</title>
        <authorList>
            <person name="Tang S."/>
            <person name="Men P."/>
            <person name="Zhang W."/>
            <person name="Li H."/>
            <person name="Li Z."/>
            <person name="Huang X."/>
            <person name="Lu X."/>
        </authorList>
    </citation>
    <scope>FUNCTION</scope>
    <scope>INDUCTION</scope>
    <scope>DISRUPTION PHENOTYPE</scope>
</reference>
<feature type="chain" id="PRO_0000456012" description="MFS-type transporter pgmG">
    <location>
        <begin position="1"/>
        <end position="577"/>
    </location>
</feature>
<feature type="transmembrane region" description="Helical" evidence="1">
    <location>
        <begin position="45"/>
        <end position="65"/>
    </location>
</feature>
<feature type="transmembrane region" description="Helical" evidence="1">
    <location>
        <begin position="84"/>
        <end position="104"/>
    </location>
</feature>
<feature type="transmembrane region" description="Helical" evidence="1">
    <location>
        <begin position="111"/>
        <end position="131"/>
    </location>
</feature>
<feature type="transmembrane region" description="Helical" evidence="1">
    <location>
        <begin position="141"/>
        <end position="161"/>
    </location>
</feature>
<feature type="transmembrane region" description="Helical" evidence="1">
    <location>
        <begin position="174"/>
        <end position="194"/>
    </location>
</feature>
<feature type="transmembrane region" description="Helical" evidence="1">
    <location>
        <begin position="218"/>
        <end position="238"/>
    </location>
</feature>
<feature type="transmembrane region" description="Helical" evidence="1">
    <location>
        <begin position="259"/>
        <end position="279"/>
    </location>
</feature>
<feature type="transmembrane region" description="Helical" evidence="1">
    <location>
        <begin position="292"/>
        <end position="312"/>
    </location>
</feature>
<feature type="transmembrane region" description="Helical" evidence="1">
    <location>
        <begin position="330"/>
        <end position="350"/>
    </location>
</feature>
<feature type="transmembrane region" description="Helical" evidence="1">
    <location>
        <begin position="363"/>
        <end position="383"/>
    </location>
</feature>
<feature type="transmembrane region" description="Helical" evidence="1">
    <location>
        <begin position="395"/>
        <end position="415"/>
    </location>
</feature>
<feature type="transmembrane region" description="Helical" evidence="1">
    <location>
        <begin position="426"/>
        <end position="446"/>
    </location>
</feature>
<feature type="transmembrane region" description="Helical" evidence="1">
    <location>
        <begin position="457"/>
        <end position="477"/>
    </location>
</feature>
<feature type="transmembrane region" description="Helical" evidence="1">
    <location>
        <begin position="532"/>
        <end position="552"/>
    </location>
</feature>
<feature type="region of interest" description="Disordered" evidence="3">
    <location>
        <begin position="1"/>
        <end position="32"/>
    </location>
</feature>
<feature type="compositionally biased region" description="Basic and acidic residues" evidence="3">
    <location>
        <begin position="21"/>
        <end position="31"/>
    </location>
</feature>
<feature type="glycosylation site" description="N-linked (GlcNAc...) asparagine" evidence="2">
    <location>
        <position position="317"/>
    </location>
</feature>
<feature type="glycosylation site" description="N-linked (GlcNAc...) asparagine" evidence="2">
    <location>
        <position position="360"/>
    </location>
</feature>
<name>PGMG_ASPTN</name>
<dbReference type="EMBL" id="CH476601">
    <property type="protein sequence ID" value="EAU33971.1"/>
    <property type="molecule type" value="Genomic_DNA"/>
</dbReference>
<dbReference type="RefSeq" id="XP_001215388.1">
    <property type="nucleotide sequence ID" value="XM_001215388.1"/>
</dbReference>
<dbReference type="SMR" id="Q0CJC4"/>
<dbReference type="STRING" id="341663.Q0CJC4"/>
<dbReference type="GlyCosmos" id="Q0CJC4">
    <property type="glycosylation" value="2 sites, No reported glycans"/>
</dbReference>
<dbReference type="EnsemblFungi" id="EAU33971">
    <property type="protein sequence ID" value="EAU33971"/>
    <property type="gene ID" value="ATEG_06210"/>
</dbReference>
<dbReference type="GeneID" id="4321479"/>
<dbReference type="VEuPathDB" id="FungiDB:ATEG_06210"/>
<dbReference type="eggNOG" id="KOG0254">
    <property type="taxonomic scope" value="Eukaryota"/>
</dbReference>
<dbReference type="HOGENOM" id="CLU_000960_22_1_1"/>
<dbReference type="OMA" id="GQFNAKW"/>
<dbReference type="OrthoDB" id="10021397at2759"/>
<dbReference type="Proteomes" id="UP000007963">
    <property type="component" value="Unassembled WGS sequence"/>
</dbReference>
<dbReference type="GO" id="GO:0005886">
    <property type="term" value="C:plasma membrane"/>
    <property type="evidence" value="ECO:0007669"/>
    <property type="project" value="TreeGrafter"/>
</dbReference>
<dbReference type="GO" id="GO:0022857">
    <property type="term" value="F:transmembrane transporter activity"/>
    <property type="evidence" value="ECO:0007669"/>
    <property type="project" value="InterPro"/>
</dbReference>
<dbReference type="Gene3D" id="1.20.1250.20">
    <property type="entry name" value="MFS general substrate transporter like domains"/>
    <property type="match status" value="1"/>
</dbReference>
<dbReference type="InterPro" id="IPR011701">
    <property type="entry name" value="MFS"/>
</dbReference>
<dbReference type="InterPro" id="IPR020846">
    <property type="entry name" value="MFS_dom"/>
</dbReference>
<dbReference type="InterPro" id="IPR036259">
    <property type="entry name" value="MFS_trans_sf"/>
</dbReference>
<dbReference type="PANTHER" id="PTHR23501">
    <property type="entry name" value="MAJOR FACILITATOR SUPERFAMILY"/>
    <property type="match status" value="1"/>
</dbReference>
<dbReference type="PANTHER" id="PTHR23501:SF12">
    <property type="entry name" value="MAJOR FACILITATOR SUPERFAMILY (MFS) PROFILE DOMAIN-CONTAINING PROTEIN-RELATED"/>
    <property type="match status" value="1"/>
</dbReference>
<dbReference type="Pfam" id="PF07690">
    <property type="entry name" value="MFS_1"/>
    <property type="match status" value="2"/>
</dbReference>
<dbReference type="SUPFAM" id="SSF103473">
    <property type="entry name" value="MFS general substrate transporter"/>
    <property type="match status" value="2"/>
</dbReference>
<dbReference type="PROSITE" id="PS50850">
    <property type="entry name" value="MFS"/>
    <property type="match status" value="1"/>
</dbReference>
<gene>
    <name evidence="6" type="primary">pgmG</name>
    <name type="ORF">ATEG_06210</name>
</gene>
<organism>
    <name type="scientific">Aspergillus terreus (strain NIH 2624 / FGSC A1156)</name>
    <dbReference type="NCBI Taxonomy" id="341663"/>
    <lineage>
        <taxon>Eukaryota</taxon>
        <taxon>Fungi</taxon>
        <taxon>Dikarya</taxon>
        <taxon>Ascomycota</taxon>
        <taxon>Pezizomycotina</taxon>
        <taxon>Eurotiomycetes</taxon>
        <taxon>Eurotiomycetidae</taxon>
        <taxon>Eurotiales</taxon>
        <taxon>Aspergillaceae</taxon>
        <taxon>Aspergillus</taxon>
        <taxon>Aspergillus subgen. Circumdati</taxon>
    </lineage>
</organism>
<sequence>MSETVTQTETDQRPATARSLGAEEKEAKSDEQFQQERTIKGFRWFIVIISILSSVTLYSLDNTIVADIQPQIINTFDELDKLPWLSVAFLVACVATNSIWSKIYSQLNAKWLYLFCVVLFEVGSAMCGAAPTINTLIGGRALAGLGGAGLYVGVMTLLSVNTSKRERPMYIGMTGLTWGVGTVLGPIVGGGFAVSKVGWRWSFYINRECRPSVQPIRPLTVPPVFFAAVAIPIYLFMLPSFDPRPGVSYKERLAQLDYLGTILMIGACVSGVMAINFGGQIYPWDSGQTISCFVVSGVLFIVFGLQQWYCIGTTKENRTFPCQFLARPAFIILFVQTASVATVFFVPIYFVPLFFQFTRNDSAIDAGVRLLPLVCFIVAAMILNGALMSKFGYYMPWYLVGGCLSLVGSVLMYTIKLGTSTANIYGYMIILGVGGGMYAQASFAVAQGKARPREIPVATGFISLAQLTGGTIALAIANSVFLEKASAGIMAVVPDASKETVQSAISGASSSFFQTLDPDVREAVLAAVTHAISQVYILPITGAAMSISLAIFMPREKLFVASDSGDRDGVTPLGAMG</sequence>
<protein>
    <recommendedName>
        <fullName evidence="7">MFS-type transporter pgmG</fullName>
    </recommendedName>
    <alternativeName>
        <fullName evidence="7">Pigmented naphthoquinones biosynthesis cluster protein G</fullName>
    </alternativeName>
</protein>
<keyword id="KW-0325">Glycoprotein</keyword>
<keyword id="KW-0472">Membrane</keyword>
<keyword id="KW-1185">Reference proteome</keyword>
<keyword id="KW-0812">Transmembrane</keyword>
<keyword id="KW-1133">Transmembrane helix</keyword>
<keyword id="KW-0813">Transport</keyword>
<proteinExistence type="evidence at transcript level"/>
<comment type="function">
    <text evidence="4 5">MFS-type transporter; part of the gene cluster that mediates the biosynthesis of pleosporalin A, ascomycone A, as well as a third cryptic naphthoquinone derived pigment, all responsible for the coloration of conidia (PubMed:28471414, PubMed:35351612). Seems not to be involved in pigment biosynthesis although its expression is regulated by the cluster-specific transcription factor pgmR (PubMed:35351612).</text>
</comment>
<comment type="subcellular location">
    <subcellularLocation>
        <location evidence="1">Membrane</location>
        <topology evidence="1">Multi-pass membrane protein</topology>
    </subcellularLocation>
</comment>
<comment type="induction">
    <text evidence="5">Expression is positively regulated by the pgm cluster-specific transcription factor pgmR.</text>
</comment>
<comment type="disruption phenotype">
    <text evidence="5">Does not affect the production of the naphthoquinones derived pigments.</text>
</comment>
<comment type="similarity">
    <text evidence="8">Belongs to the major facilitator superfamily. TCR/Tet family.</text>
</comment>
<accession>Q0CJC4</accession>